<proteinExistence type="inferred from homology"/>
<gene>
    <name evidence="1" type="primary">rpsT</name>
    <name type="ordered locus">HP_0076</name>
</gene>
<organism>
    <name type="scientific">Helicobacter pylori (strain ATCC 700392 / 26695)</name>
    <name type="common">Campylobacter pylori</name>
    <dbReference type="NCBI Taxonomy" id="85962"/>
    <lineage>
        <taxon>Bacteria</taxon>
        <taxon>Pseudomonadati</taxon>
        <taxon>Campylobacterota</taxon>
        <taxon>Epsilonproteobacteria</taxon>
        <taxon>Campylobacterales</taxon>
        <taxon>Helicobacteraceae</taxon>
        <taxon>Helicobacter</taxon>
    </lineage>
</organism>
<dbReference type="EMBL" id="AE000511">
    <property type="protein sequence ID" value="AAD07147.1"/>
    <property type="molecule type" value="Genomic_DNA"/>
</dbReference>
<dbReference type="PIR" id="D64529">
    <property type="entry name" value="D64529"/>
</dbReference>
<dbReference type="RefSeq" id="NP_206876.1">
    <property type="nucleotide sequence ID" value="NC_000915.1"/>
</dbReference>
<dbReference type="RefSeq" id="WP_001273615.1">
    <property type="nucleotide sequence ID" value="NC_018939.1"/>
</dbReference>
<dbReference type="SMR" id="P56027"/>
<dbReference type="FunCoup" id="P56027">
    <property type="interactions" value="362"/>
</dbReference>
<dbReference type="STRING" id="85962.HP_0076"/>
<dbReference type="PaxDb" id="85962-C694_00370"/>
<dbReference type="EnsemblBacteria" id="AAD07147">
    <property type="protein sequence ID" value="AAD07147"/>
    <property type="gene ID" value="HP_0076"/>
</dbReference>
<dbReference type="KEGG" id="heo:C694_00370"/>
<dbReference type="KEGG" id="hpy:HP_0076"/>
<dbReference type="PATRIC" id="fig|85962.47.peg.80"/>
<dbReference type="eggNOG" id="COG0268">
    <property type="taxonomic scope" value="Bacteria"/>
</dbReference>
<dbReference type="InParanoid" id="P56027"/>
<dbReference type="OrthoDB" id="9807974at2"/>
<dbReference type="PhylomeDB" id="P56027"/>
<dbReference type="Proteomes" id="UP000000429">
    <property type="component" value="Chromosome"/>
</dbReference>
<dbReference type="GO" id="GO:0005829">
    <property type="term" value="C:cytosol"/>
    <property type="evidence" value="ECO:0000318"/>
    <property type="project" value="GO_Central"/>
</dbReference>
<dbReference type="GO" id="GO:0015935">
    <property type="term" value="C:small ribosomal subunit"/>
    <property type="evidence" value="ECO:0000318"/>
    <property type="project" value="GO_Central"/>
</dbReference>
<dbReference type="GO" id="GO:0070181">
    <property type="term" value="F:small ribosomal subunit rRNA binding"/>
    <property type="evidence" value="ECO:0000318"/>
    <property type="project" value="GO_Central"/>
</dbReference>
<dbReference type="GO" id="GO:0003735">
    <property type="term" value="F:structural constituent of ribosome"/>
    <property type="evidence" value="ECO:0007669"/>
    <property type="project" value="InterPro"/>
</dbReference>
<dbReference type="GO" id="GO:0006412">
    <property type="term" value="P:translation"/>
    <property type="evidence" value="ECO:0007669"/>
    <property type="project" value="UniProtKB-UniRule"/>
</dbReference>
<dbReference type="FunFam" id="1.20.58.110:FF:000001">
    <property type="entry name" value="30S ribosomal protein S20"/>
    <property type="match status" value="1"/>
</dbReference>
<dbReference type="Gene3D" id="1.20.58.110">
    <property type="entry name" value="Ribosomal protein S20"/>
    <property type="match status" value="1"/>
</dbReference>
<dbReference type="HAMAP" id="MF_00500">
    <property type="entry name" value="Ribosomal_bS20"/>
    <property type="match status" value="1"/>
</dbReference>
<dbReference type="InterPro" id="IPR002583">
    <property type="entry name" value="Ribosomal_bS20"/>
</dbReference>
<dbReference type="InterPro" id="IPR036510">
    <property type="entry name" value="Ribosomal_bS20_sf"/>
</dbReference>
<dbReference type="NCBIfam" id="TIGR00029">
    <property type="entry name" value="S20"/>
    <property type="match status" value="1"/>
</dbReference>
<dbReference type="PANTHER" id="PTHR33398">
    <property type="entry name" value="30S RIBOSOMAL PROTEIN S20"/>
    <property type="match status" value="1"/>
</dbReference>
<dbReference type="PANTHER" id="PTHR33398:SF1">
    <property type="entry name" value="SMALL RIBOSOMAL SUBUNIT PROTEIN BS20C"/>
    <property type="match status" value="1"/>
</dbReference>
<dbReference type="Pfam" id="PF01649">
    <property type="entry name" value="Ribosomal_S20p"/>
    <property type="match status" value="1"/>
</dbReference>
<dbReference type="SUPFAM" id="SSF46992">
    <property type="entry name" value="Ribosomal protein S20"/>
    <property type="match status" value="1"/>
</dbReference>
<accession>P56027</accession>
<keyword id="KW-1185">Reference proteome</keyword>
<keyword id="KW-0687">Ribonucleoprotein</keyword>
<keyword id="KW-0689">Ribosomal protein</keyword>
<keyword id="KW-0694">RNA-binding</keyword>
<keyword id="KW-0699">rRNA-binding</keyword>
<evidence type="ECO:0000255" key="1">
    <source>
        <dbReference type="HAMAP-Rule" id="MF_00500"/>
    </source>
</evidence>
<evidence type="ECO:0000305" key="2"/>
<comment type="function">
    <text evidence="1">Binds directly to 16S ribosomal RNA.</text>
</comment>
<comment type="similarity">
    <text evidence="1">Belongs to the bacterial ribosomal protein bS20 family.</text>
</comment>
<name>RS20_HELPY</name>
<sequence length="89" mass="10196">MANHKSAEKRIRQTIKRTERNRFYKTKIKNIIKAVREAVAVNDVAKAQERLKIANKELHKFVSKGILKKNTASRKVSRLNASVKKIALA</sequence>
<feature type="chain" id="PRO_0000167971" description="Small ribosomal subunit protein bS20">
    <location>
        <begin position="1"/>
        <end position="89"/>
    </location>
</feature>
<protein>
    <recommendedName>
        <fullName evidence="1">Small ribosomal subunit protein bS20</fullName>
    </recommendedName>
    <alternativeName>
        <fullName evidence="2">30S ribosomal protein S20</fullName>
    </alternativeName>
</protein>
<reference key="1">
    <citation type="journal article" date="1997" name="Nature">
        <title>The complete genome sequence of the gastric pathogen Helicobacter pylori.</title>
        <authorList>
            <person name="Tomb J.-F."/>
            <person name="White O."/>
            <person name="Kerlavage A.R."/>
            <person name="Clayton R.A."/>
            <person name="Sutton G.G."/>
            <person name="Fleischmann R.D."/>
            <person name="Ketchum K.A."/>
            <person name="Klenk H.-P."/>
            <person name="Gill S.R."/>
            <person name="Dougherty B.A."/>
            <person name="Nelson K.E."/>
            <person name="Quackenbush J."/>
            <person name="Zhou L."/>
            <person name="Kirkness E.F."/>
            <person name="Peterson S.N."/>
            <person name="Loftus B.J."/>
            <person name="Richardson D.L."/>
            <person name="Dodson R.J."/>
            <person name="Khalak H.G."/>
            <person name="Glodek A."/>
            <person name="McKenney K."/>
            <person name="FitzGerald L.M."/>
            <person name="Lee N."/>
            <person name="Adams M.D."/>
            <person name="Hickey E.K."/>
            <person name="Berg D.E."/>
            <person name="Gocayne J.D."/>
            <person name="Utterback T.R."/>
            <person name="Peterson J.D."/>
            <person name="Kelley J.M."/>
            <person name="Cotton M.D."/>
            <person name="Weidman J.F."/>
            <person name="Fujii C."/>
            <person name="Bowman C."/>
            <person name="Watthey L."/>
            <person name="Wallin E."/>
            <person name="Hayes W.S."/>
            <person name="Borodovsky M."/>
            <person name="Karp P.D."/>
            <person name="Smith H.O."/>
            <person name="Fraser C.M."/>
            <person name="Venter J.C."/>
        </authorList>
    </citation>
    <scope>NUCLEOTIDE SEQUENCE [LARGE SCALE GENOMIC DNA]</scope>
    <source>
        <strain>ATCC 700392 / 26695</strain>
    </source>
</reference>